<dbReference type="SMR" id="P86290"/>
<dbReference type="GO" id="GO:0005581">
    <property type="term" value="C:collagen trimer"/>
    <property type="evidence" value="ECO:0007669"/>
    <property type="project" value="UniProtKB-KW"/>
</dbReference>
<dbReference type="GO" id="GO:0005576">
    <property type="term" value="C:extracellular region"/>
    <property type="evidence" value="ECO:0007669"/>
    <property type="project" value="UniProtKB-KW"/>
</dbReference>
<dbReference type="InterPro" id="IPR008160">
    <property type="entry name" value="Collagen"/>
</dbReference>
<dbReference type="Pfam" id="PF01391">
    <property type="entry name" value="Collagen"/>
    <property type="match status" value="1"/>
</dbReference>
<gene>
    <name evidence="1" type="primary">COL1A2</name>
</gene>
<sequence length="36" mass="3122">GSNGEPGSAGPPGPAGLRGLPGESGAVGPAGPPGSR</sequence>
<reference evidence="6" key="1">
    <citation type="journal article" date="2009" name="Science">
        <title>Biomolecular characterization and protein sequences of the Campanian hadrosaur B. canadensis.</title>
        <authorList>
            <person name="Schweitzer M.H."/>
            <person name="Zheng W."/>
            <person name="Organ C.L."/>
            <person name="Avci R."/>
            <person name="Suo Z."/>
            <person name="Freimark L.M."/>
            <person name="Lebleu V.S."/>
            <person name="Duncan M.B."/>
            <person name="Vander Heiden M.G."/>
            <person name="Neveu J.M."/>
            <person name="Lane W.S."/>
            <person name="Cottrell J.S."/>
            <person name="Horner J.R."/>
            <person name="Cantley L.C."/>
            <person name="Kalluri R."/>
            <person name="Asara J.M."/>
        </authorList>
    </citation>
    <scope>PROTEIN SEQUENCE</scope>
    <scope>IDENTIFICATION BY MASS SPECTROMETRY</scope>
    <scope>HYDROXYLATION AT PRO-6; PRO-12 AND PRO-33</scope>
    <source>
        <tissue evidence="4">Bone</tissue>
    </source>
</reference>
<keyword id="KW-0176">Collagen</keyword>
<keyword id="KW-0903">Direct protein sequencing</keyword>
<keyword id="KW-0952">Extinct organism protein</keyword>
<keyword id="KW-0272">Extracellular matrix</keyword>
<keyword id="KW-0379">Hydroxylation</keyword>
<keyword id="KW-0677">Repeat</keyword>
<keyword id="KW-0964">Secreted</keyword>
<protein>
    <recommendedName>
        <fullName evidence="5">Collagen alpha-2(I) chain</fullName>
    </recommendedName>
    <alternativeName>
        <fullName evidence="1">Alpha-2 type I collagen</fullName>
    </alternativeName>
</protein>
<feature type="chain" id="PRO_0000376866" description="Collagen alpha-2(I) chain">
    <location>
        <begin position="1" status="less than"/>
        <end position="36" status="greater than"/>
    </location>
</feature>
<feature type="region of interest" description="Disordered" evidence="3">
    <location>
        <begin position="1"/>
        <end position="36"/>
    </location>
</feature>
<feature type="compositionally biased region" description="Low complexity" evidence="3">
    <location>
        <begin position="15"/>
        <end position="29"/>
    </location>
</feature>
<feature type="modified residue" description="4-hydroxyproline" evidence="4">
    <location>
        <position position="6"/>
    </location>
</feature>
<feature type="modified residue" description="4-hydroxyproline" evidence="4">
    <location>
        <position position="12"/>
    </location>
</feature>
<feature type="modified residue" description="4-hydroxyproline" evidence="4">
    <location>
        <position position="33"/>
    </location>
</feature>
<feature type="non-consecutive residues" evidence="5">
    <location>
        <begin position="18"/>
        <end position="19"/>
    </location>
</feature>
<feature type="non-terminal residue" evidence="5">
    <location>
        <position position="1"/>
    </location>
</feature>
<feature type="non-terminal residue" evidence="5">
    <location>
        <position position="36"/>
    </location>
</feature>
<evidence type="ECO:0000250" key="1">
    <source>
        <dbReference type="UniProtKB" id="P02467"/>
    </source>
</evidence>
<evidence type="ECO:0000255" key="2"/>
<evidence type="ECO:0000256" key="3">
    <source>
        <dbReference type="SAM" id="MobiDB-lite"/>
    </source>
</evidence>
<evidence type="ECO:0000269" key="4">
    <source>
    </source>
</evidence>
<evidence type="ECO:0000303" key="5">
    <source>
    </source>
</evidence>
<evidence type="ECO:0000305" key="6"/>
<accession>P86290</accession>
<proteinExistence type="evidence at protein level"/>
<organism>
    <name type="scientific">Brachylophosaurus canadensis</name>
    <name type="common">Campanian hadrosaur</name>
    <dbReference type="NCBI Taxonomy" id="643745"/>
    <lineage>
        <taxon>Eukaryota</taxon>
        <taxon>Metazoa</taxon>
        <taxon>Chordata</taxon>
        <taxon>Craniata</taxon>
        <taxon>Vertebrata</taxon>
        <taxon>Euteleostomi</taxon>
        <taxon>Archelosauria</taxon>
        <taxon>Archosauria</taxon>
        <taxon>Dinosauria</taxon>
        <taxon>Ornithischia</taxon>
        <taxon>Ornithopoda</taxon>
        <taxon>Hadrosauridae</taxon>
        <taxon>Brachylophosaurus</taxon>
    </lineage>
</organism>
<comment type="function">
    <text evidence="6">Type I collagen is a member of group I collagen (fibrillar forming collagen).</text>
</comment>
<comment type="subunit">
    <text evidence="6">Trimers of one alpha 2(I) and two alpha 1(I) chains.</text>
</comment>
<comment type="subcellular location">
    <subcellularLocation>
        <location evidence="1">Secreted</location>
        <location evidence="1">Extracellular space</location>
        <location evidence="1">Extracellular matrix</location>
    </subcellularLocation>
</comment>
<comment type="PTM">
    <text evidence="4 6">Proline residues at the third position of the tripeptide repeating unit (G-X-Y) are hydroxylated in some or all of the chains.</text>
</comment>
<comment type="miscellaneous">
    <text>These protein fragments were extracted from an 80-million-year-old fossil. The tryptic peptides required multiple purification steps in order to eliminate contaminants and to increase the concentration of peptidic material.</text>
</comment>
<comment type="similarity">
    <text evidence="2">Belongs to the fibrillar collagen family.</text>
</comment>
<name>CO1A2_BRACN</name>